<protein>
    <recommendedName>
        <fullName evidence="5">(-)-beta-pinene synthase 1, chloroplastic</fullName>
        <ecNumber evidence="4">4.2.3.120</ecNumber>
    </recommendedName>
    <alternativeName>
        <fullName evidence="5">(-)-alpha-pinene synthase (-)betapin1, chloroplastic</fullName>
        <ecNumber evidence="4">4.2.3.119</ecNumber>
    </alternativeName>
    <alternativeName>
        <fullName evidence="5">Terpene synthase (-)betapin1</fullName>
        <shortName evidence="5">PcTPS-(-)betapin1</shortName>
    </alternativeName>
</protein>
<gene>
    <name evidence="5" type="primary">TPS-(-)Bpin1</name>
</gene>
<organism>
    <name type="scientific">Pinus contorta</name>
    <name type="common">Shore pine</name>
    <name type="synonym">Lodgepole pine</name>
    <dbReference type="NCBI Taxonomy" id="3339"/>
    <lineage>
        <taxon>Eukaryota</taxon>
        <taxon>Viridiplantae</taxon>
        <taxon>Streptophyta</taxon>
        <taxon>Embryophyta</taxon>
        <taxon>Tracheophyta</taxon>
        <taxon>Spermatophyta</taxon>
        <taxon>Pinopsida</taxon>
        <taxon>Pinidae</taxon>
        <taxon>Conifers I</taxon>
        <taxon>Pinales</taxon>
        <taxon>Pinaceae</taxon>
        <taxon>Pinus</taxon>
        <taxon>Pinus subgen. Pinus</taxon>
    </lineage>
</organism>
<accession>R9QMQ9</accession>
<proteinExistence type="evidence at protein level"/>
<reference key="1">
    <citation type="journal article" date="2013" name="BMC Plant Biol.">
        <title>Transcriptome resources and functional characterization of monoterpene synthases for two host species of the mountain pine beetle, lodgepole pine (Pinus contorta) and jack pine (Pinus banksiana).</title>
        <authorList>
            <person name="Hall D.E."/>
            <person name="Yuen M.M.S."/>
            <person name="Jancsik S."/>
            <person name="Quesada A.L."/>
            <person name="Dullat H.K."/>
            <person name="Li M."/>
            <person name="Henderson H."/>
            <person name="Arango-Velez A."/>
            <person name="Liao N.Y."/>
            <person name="Docking R.T."/>
            <person name="Chan S.K."/>
            <person name="Cooke J.E.K."/>
            <person name="Breuil C."/>
            <person name="Jones S.J.M."/>
            <person name="Keeling C.I."/>
            <person name="Bohlmann J."/>
        </authorList>
    </citation>
    <scope>NUCLEOTIDE SEQUENCE [MRNA]</scope>
    <scope>FUNCTION</scope>
    <scope>CATALYTIC ACTIVITY</scope>
    <scope>PATHWAY</scope>
</reference>
<sequence length="627" mass="71822">MDLISVLPSTSKSCVCLHKPLSSSTHKLKPFCRTIRILGMPRPRKSVLMASSMSMSVNTLVSDDDIQRRTGGYHSNLWNDDVIQFLSTPYGELAYRERGERLIDEVREIFSSMSLEDGEFSDLIQRLWMVDNVERLGIDRHFKNEIKSALDYVYSYWSEKGIGCGTKSIITNLNSTALGFRTLRLHGYPVSADVLKHFRNQIGQFVSCPSETEEDIRSIVNLYRASLIAFPGEKVMEEAERFSEKYLKETLQKIPDCSLSREIGDVLEHGWHTNLPRLEARNYIDVFGQDTKNMESNRKTEKLLELAKLEFNIFQSIQKTELESLLRWWNDSGSPQITFTRHRHVEYYTLASCIAFEPQHSGFRLGFAKACHIITVLDDMYDLFGTVDELKLFTAAIKRWDPSATDCLPQYMKGIYMMVYNTVNEMSAEAQKAQGRDTLNYARQAWEVYLDSYMQEAKWIATGYLPTFEEYLENGKVSSGHRVSALQPMLTMDIPFPPHILKEVDFPSNLNDLACAILRLRGDTRCYQEDRARGEETSCISCYMKDNPGATEEDALNHLNVMISGVIKGLNWELLKPDSGVPISSKKINFDITRAFHYGYKYRDGYSVSSVETKSLVMRTLLEPVPL</sequence>
<dbReference type="EC" id="4.2.3.120" evidence="4"/>
<dbReference type="EC" id="4.2.3.119" evidence="4"/>
<dbReference type="EMBL" id="JQ240293">
    <property type="protein sequence ID" value="AFU73845.1"/>
    <property type="molecule type" value="mRNA"/>
</dbReference>
<dbReference type="SMR" id="R9QMQ9"/>
<dbReference type="UniPathway" id="UPA00213"/>
<dbReference type="UniPathway" id="UPA00924"/>
<dbReference type="GO" id="GO:0009507">
    <property type="term" value="C:chloroplast"/>
    <property type="evidence" value="ECO:0007669"/>
    <property type="project" value="UniProtKB-SubCell"/>
</dbReference>
<dbReference type="GO" id="GO:0000287">
    <property type="term" value="F:magnesium ion binding"/>
    <property type="evidence" value="ECO:0007669"/>
    <property type="project" value="InterPro"/>
</dbReference>
<dbReference type="GO" id="GO:0050550">
    <property type="term" value="F:pinene synthase activity"/>
    <property type="evidence" value="ECO:0000314"/>
    <property type="project" value="UniProtKB"/>
</dbReference>
<dbReference type="GO" id="GO:0010333">
    <property type="term" value="F:terpene synthase activity"/>
    <property type="evidence" value="ECO:0000314"/>
    <property type="project" value="UniProtKB"/>
</dbReference>
<dbReference type="GO" id="GO:0018867">
    <property type="term" value="P:alpha-pinene metabolic process"/>
    <property type="evidence" value="ECO:0000314"/>
    <property type="project" value="UniProtKB"/>
</dbReference>
<dbReference type="GO" id="GO:0016102">
    <property type="term" value="P:diterpenoid biosynthetic process"/>
    <property type="evidence" value="ECO:0007669"/>
    <property type="project" value="InterPro"/>
</dbReference>
<dbReference type="GO" id="GO:0010597">
    <property type="term" value="P:green leaf volatile biosynthetic process"/>
    <property type="evidence" value="ECO:0000314"/>
    <property type="project" value="UniProtKB"/>
</dbReference>
<dbReference type="GO" id="GO:0016114">
    <property type="term" value="P:terpenoid biosynthetic process"/>
    <property type="evidence" value="ECO:0000314"/>
    <property type="project" value="UniProtKB"/>
</dbReference>
<dbReference type="CDD" id="cd00684">
    <property type="entry name" value="Terpene_cyclase_plant_C1"/>
    <property type="match status" value="1"/>
</dbReference>
<dbReference type="FunFam" id="1.50.10.130:FF:000004">
    <property type="entry name" value="Carene synthase, chloroplastic"/>
    <property type="match status" value="1"/>
</dbReference>
<dbReference type="FunFam" id="1.10.600.10:FF:000005">
    <property type="entry name" value="Ent-kaur-16-ene synthase, chloroplastic"/>
    <property type="match status" value="1"/>
</dbReference>
<dbReference type="Gene3D" id="1.10.600.10">
    <property type="entry name" value="Farnesyl Diphosphate Synthase"/>
    <property type="match status" value="1"/>
</dbReference>
<dbReference type="Gene3D" id="1.50.10.130">
    <property type="entry name" value="Terpene synthase, N-terminal domain"/>
    <property type="match status" value="1"/>
</dbReference>
<dbReference type="InterPro" id="IPR008949">
    <property type="entry name" value="Isoprenoid_synthase_dom_sf"/>
</dbReference>
<dbReference type="InterPro" id="IPR034741">
    <property type="entry name" value="Terpene_cyclase-like_1_C"/>
</dbReference>
<dbReference type="InterPro" id="IPR044814">
    <property type="entry name" value="Terpene_cyclase_plant_C1"/>
</dbReference>
<dbReference type="InterPro" id="IPR001906">
    <property type="entry name" value="Terpene_synth_N"/>
</dbReference>
<dbReference type="InterPro" id="IPR036965">
    <property type="entry name" value="Terpene_synth_N_sf"/>
</dbReference>
<dbReference type="InterPro" id="IPR050148">
    <property type="entry name" value="Terpene_synthase-like"/>
</dbReference>
<dbReference type="InterPro" id="IPR005630">
    <property type="entry name" value="Terpene_synthase_metal-bd"/>
</dbReference>
<dbReference type="InterPro" id="IPR008930">
    <property type="entry name" value="Terpenoid_cyclase/PrenylTrfase"/>
</dbReference>
<dbReference type="PANTHER" id="PTHR31225">
    <property type="entry name" value="OS04G0344100 PROTEIN-RELATED"/>
    <property type="match status" value="1"/>
</dbReference>
<dbReference type="PANTHER" id="PTHR31225:SF98">
    <property type="entry name" value="TERPENE SYNTHASE 9-RELATED"/>
    <property type="match status" value="1"/>
</dbReference>
<dbReference type="Pfam" id="PF01397">
    <property type="entry name" value="Terpene_synth"/>
    <property type="match status" value="1"/>
</dbReference>
<dbReference type="Pfam" id="PF03936">
    <property type="entry name" value="Terpene_synth_C"/>
    <property type="match status" value="1"/>
</dbReference>
<dbReference type="SFLD" id="SFLDS00005">
    <property type="entry name" value="Isoprenoid_Synthase_Type_I"/>
    <property type="match status" value="1"/>
</dbReference>
<dbReference type="SFLD" id="SFLDG01019">
    <property type="entry name" value="Terpene_Cyclase_Like_1_C_Termi"/>
    <property type="match status" value="1"/>
</dbReference>
<dbReference type="SFLD" id="SFLDG01014">
    <property type="entry name" value="Terpene_Cyclase_Like_1_N-term"/>
    <property type="match status" value="1"/>
</dbReference>
<dbReference type="SUPFAM" id="SSF48239">
    <property type="entry name" value="Terpenoid cyclases/Protein prenyltransferases"/>
    <property type="match status" value="1"/>
</dbReference>
<dbReference type="SUPFAM" id="SSF48576">
    <property type="entry name" value="Terpenoid synthases"/>
    <property type="match status" value="1"/>
</dbReference>
<evidence type="ECO:0000250" key="1">
    <source>
        <dbReference type="UniProtKB" id="A0A1C9J6A7"/>
    </source>
</evidence>
<evidence type="ECO:0000250" key="2">
    <source>
        <dbReference type="UniProtKB" id="Q40577"/>
    </source>
</evidence>
<evidence type="ECO:0000255" key="3"/>
<evidence type="ECO:0000269" key="4">
    <source>
    </source>
</evidence>
<evidence type="ECO:0000303" key="5">
    <source>
    </source>
</evidence>
<evidence type="ECO:0000305" key="6"/>
<comment type="function">
    <text evidence="4">Monoterpene synthase (TPS) involved in the biosynthesis of monoterpene natural products included in conifer oleoresin secretions and volatile emissions; these compounds contribute to biotic and abiotic stress defense against herbivores and pathogens (PubMed:23679205). Catalyzes the conversion of (2E)-geranyl diphosphate (GPP) to (-)-beta-pinene and, to a lower extent, to (-)-alpha-pinene (PubMed:23679205).</text>
</comment>
<comment type="catalytic activity">
    <reaction evidence="4">
        <text>(2E)-geranyl diphosphate = (1S,5S)-beta-pinene + diphosphate</text>
        <dbReference type="Rhea" id="RHEA:25496"/>
        <dbReference type="ChEBI" id="CHEBI:28359"/>
        <dbReference type="ChEBI" id="CHEBI:33019"/>
        <dbReference type="ChEBI" id="CHEBI:58057"/>
        <dbReference type="EC" id="4.2.3.120"/>
    </reaction>
    <physiologicalReaction direction="left-to-right" evidence="4">
        <dbReference type="Rhea" id="RHEA:25497"/>
    </physiologicalReaction>
</comment>
<comment type="catalytic activity">
    <reaction evidence="4">
        <text>(2E)-geranyl diphosphate = (1S,5S)-alpha-pinene + diphosphate</text>
        <dbReference type="Rhea" id="RHEA:25488"/>
        <dbReference type="ChEBI" id="CHEBI:28660"/>
        <dbReference type="ChEBI" id="CHEBI:33019"/>
        <dbReference type="ChEBI" id="CHEBI:58057"/>
        <dbReference type="EC" id="4.2.3.119"/>
    </reaction>
    <physiologicalReaction direction="left-to-right" evidence="4">
        <dbReference type="Rhea" id="RHEA:25489"/>
    </physiologicalReaction>
</comment>
<comment type="cofactor">
    <cofactor evidence="1">
        <name>Mg(2+)</name>
        <dbReference type="ChEBI" id="CHEBI:18420"/>
    </cofactor>
    <cofactor evidence="1">
        <name>Mn(2+)</name>
        <dbReference type="ChEBI" id="CHEBI:29035"/>
    </cofactor>
    <text evidence="1">Binds 3 Mg(2+) or Mn(2+) ions per subunit.</text>
</comment>
<comment type="pathway">
    <text evidence="4">Terpene metabolism; oleoresin biosynthesis.</text>
</comment>
<comment type="pathway">
    <text evidence="4">Secondary metabolite biosynthesis; terpenoid biosynthesis.</text>
</comment>
<comment type="subcellular location">
    <subcellularLocation>
        <location evidence="3">Plastid</location>
        <location evidence="3">Chloroplast</location>
    </subcellularLocation>
</comment>
<comment type="domain">
    <text evidence="6">The Asp-Asp-Xaa-Xaa-Asp/Glu (DDXXD/E) motif is important for the catalytic activity, presumably through binding to Mg(2+).</text>
</comment>
<comment type="similarity">
    <text evidence="6">Belongs to the terpene synthase family. Tpsd subfamily.</text>
</comment>
<feature type="transit peptide" description="Chloroplast" evidence="3">
    <location>
        <begin position="1"/>
        <end position="50"/>
    </location>
</feature>
<feature type="chain" id="PRO_0000455021" description="(-)-beta-pinene synthase 1, chloroplastic">
    <location>
        <begin position="51"/>
        <end position="627"/>
    </location>
</feature>
<feature type="short sequence motif" description="DDXXD motif" evidence="6">
    <location>
        <begin position="378"/>
        <end position="382"/>
    </location>
</feature>
<feature type="binding site" evidence="2">
    <location>
        <position position="378"/>
    </location>
    <ligand>
        <name>Mg(2+)</name>
        <dbReference type="ChEBI" id="CHEBI:18420"/>
        <label>1</label>
    </ligand>
</feature>
<feature type="binding site" evidence="2">
    <location>
        <position position="378"/>
    </location>
    <ligand>
        <name>Mg(2+)</name>
        <dbReference type="ChEBI" id="CHEBI:18420"/>
        <label>2</label>
    </ligand>
</feature>
<feature type="binding site" evidence="2">
    <location>
        <position position="382"/>
    </location>
    <ligand>
        <name>Mg(2+)</name>
        <dbReference type="ChEBI" id="CHEBI:18420"/>
        <label>1</label>
    </ligand>
</feature>
<feature type="binding site" evidence="2">
    <location>
        <position position="382"/>
    </location>
    <ligand>
        <name>Mg(2+)</name>
        <dbReference type="ChEBI" id="CHEBI:18420"/>
        <label>2</label>
    </ligand>
</feature>
<feature type="binding site" evidence="2">
    <location>
        <position position="530"/>
    </location>
    <ligand>
        <name>Mg(2+)</name>
        <dbReference type="ChEBI" id="CHEBI:18420"/>
        <label>3</label>
    </ligand>
</feature>
<keyword id="KW-0150">Chloroplast</keyword>
<keyword id="KW-0456">Lyase</keyword>
<keyword id="KW-0460">Magnesium</keyword>
<keyword id="KW-0479">Metal-binding</keyword>
<keyword id="KW-0934">Plastid</keyword>
<keyword id="KW-0809">Transit peptide</keyword>
<name>SBPN1_PINCO</name>